<reference key="1">
    <citation type="journal article" date="2009" name="J. Bacteriol.">
        <title>The complete genome sequence of Helicobacter pylori strain G27.</title>
        <authorList>
            <person name="Baltrus D.A."/>
            <person name="Amieva M.R."/>
            <person name="Covacci A."/>
            <person name="Lowe T.M."/>
            <person name="Merrell D.S."/>
            <person name="Ottemann K.M."/>
            <person name="Stein M."/>
            <person name="Salama N.R."/>
            <person name="Guillemin K."/>
        </authorList>
    </citation>
    <scope>NUCLEOTIDE SEQUENCE [LARGE SCALE GENOMIC DNA]</scope>
    <source>
        <strain>G27</strain>
    </source>
</reference>
<proteinExistence type="inferred from homology"/>
<sequence length="270" mass="29797">MSKIAKTAIISPKAEINKGVEIGEFCVIGDGVKLDEGVKLHNNVTLQGHTFIGKNTEIFPFAVLGTQPQDLKYKGEYSELIVGEDNLIREFCMINPGTEGGIKKTLIGDKNLLMAYVHVAHDCVIGSHCILANGVTLAGHIEIGDYVNIGGLTAIHQFVRIAKGCMIAGKSALGKDVPPYCTVEGNRAFIRGLNRHRMRQLLESKDIDFIYALYKRLFRPIPSLRESAKLELEEHANNPFVKEICSFILASSRGVAYKSSEYSSEEKQEE</sequence>
<gene>
    <name evidence="1" type="primary">lpxA</name>
    <name type="ordered locus">HPG27_1320</name>
</gene>
<name>LPXA_HELPG</name>
<keyword id="KW-0012">Acyltransferase</keyword>
<keyword id="KW-0963">Cytoplasm</keyword>
<keyword id="KW-0441">Lipid A biosynthesis</keyword>
<keyword id="KW-0444">Lipid biosynthesis</keyword>
<keyword id="KW-0443">Lipid metabolism</keyword>
<keyword id="KW-1185">Reference proteome</keyword>
<keyword id="KW-0677">Repeat</keyword>
<keyword id="KW-0808">Transferase</keyword>
<organism>
    <name type="scientific">Helicobacter pylori (strain G27)</name>
    <dbReference type="NCBI Taxonomy" id="563041"/>
    <lineage>
        <taxon>Bacteria</taxon>
        <taxon>Pseudomonadati</taxon>
        <taxon>Campylobacterota</taxon>
        <taxon>Epsilonproteobacteria</taxon>
        <taxon>Campylobacterales</taxon>
        <taxon>Helicobacteraceae</taxon>
        <taxon>Helicobacter</taxon>
    </lineage>
</organism>
<evidence type="ECO:0000255" key="1">
    <source>
        <dbReference type="HAMAP-Rule" id="MF_00387"/>
    </source>
</evidence>
<feature type="chain" id="PRO_1000122711" description="Acyl-[acyl-carrier-protein]--UDP-N-acetylglucosamine O-acyltransferase">
    <location>
        <begin position="1"/>
        <end position="270"/>
    </location>
</feature>
<comment type="function">
    <text evidence="1">Involved in the biosynthesis of lipid A, a phosphorylated glycolipid that anchors the lipopolysaccharide to the outer membrane of the cell.</text>
</comment>
<comment type="catalytic activity">
    <reaction evidence="1">
        <text>a (3R)-hydroxyacyl-[ACP] + UDP-N-acetyl-alpha-D-glucosamine = a UDP-3-O-[(3R)-3-hydroxyacyl]-N-acetyl-alpha-D-glucosamine + holo-[ACP]</text>
        <dbReference type="Rhea" id="RHEA:67812"/>
        <dbReference type="Rhea" id="RHEA-COMP:9685"/>
        <dbReference type="Rhea" id="RHEA-COMP:9945"/>
        <dbReference type="ChEBI" id="CHEBI:57705"/>
        <dbReference type="ChEBI" id="CHEBI:64479"/>
        <dbReference type="ChEBI" id="CHEBI:78827"/>
        <dbReference type="ChEBI" id="CHEBI:173225"/>
        <dbReference type="EC" id="2.3.1.129"/>
    </reaction>
</comment>
<comment type="pathway">
    <text evidence="1">Glycolipid biosynthesis; lipid IV(A) biosynthesis; lipid IV(A) from (3R)-3-hydroxytetradecanoyl-[acyl-carrier-protein] and UDP-N-acetyl-alpha-D-glucosamine: step 1/6.</text>
</comment>
<comment type="subunit">
    <text evidence="1">Homotrimer.</text>
</comment>
<comment type="subcellular location">
    <subcellularLocation>
        <location evidence="1">Cytoplasm</location>
    </subcellularLocation>
</comment>
<comment type="similarity">
    <text evidence="1">Belongs to the transferase hexapeptide repeat family. LpxA subfamily.</text>
</comment>
<protein>
    <recommendedName>
        <fullName evidence="1">Acyl-[acyl-carrier-protein]--UDP-N-acetylglucosamine O-acyltransferase</fullName>
        <shortName evidence="1">UDP-N-acetylglucosamine acyltransferase</shortName>
        <ecNumber evidence="1">2.3.1.129</ecNumber>
    </recommendedName>
</protein>
<dbReference type="EC" id="2.3.1.129" evidence="1"/>
<dbReference type="EMBL" id="CP001173">
    <property type="protein sequence ID" value="ACI28068.1"/>
    <property type="molecule type" value="Genomic_DNA"/>
</dbReference>
<dbReference type="RefSeq" id="WP_000034144.1">
    <property type="nucleotide sequence ID" value="NC_011333.1"/>
</dbReference>
<dbReference type="SMR" id="B5Z919"/>
<dbReference type="KEGG" id="hpg:HPG27_1320"/>
<dbReference type="HOGENOM" id="CLU_061249_0_0_7"/>
<dbReference type="UniPathway" id="UPA00359">
    <property type="reaction ID" value="UER00477"/>
</dbReference>
<dbReference type="Proteomes" id="UP000001735">
    <property type="component" value="Chromosome"/>
</dbReference>
<dbReference type="GO" id="GO:0005737">
    <property type="term" value="C:cytoplasm"/>
    <property type="evidence" value="ECO:0007669"/>
    <property type="project" value="UniProtKB-SubCell"/>
</dbReference>
<dbReference type="GO" id="GO:0016020">
    <property type="term" value="C:membrane"/>
    <property type="evidence" value="ECO:0007669"/>
    <property type="project" value="GOC"/>
</dbReference>
<dbReference type="GO" id="GO:0008780">
    <property type="term" value="F:acyl-[acyl-carrier-protein]-UDP-N-acetylglucosamine O-acyltransferase activity"/>
    <property type="evidence" value="ECO:0007669"/>
    <property type="project" value="UniProtKB-UniRule"/>
</dbReference>
<dbReference type="GO" id="GO:0009245">
    <property type="term" value="P:lipid A biosynthetic process"/>
    <property type="evidence" value="ECO:0007669"/>
    <property type="project" value="UniProtKB-UniRule"/>
</dbReference>
<dbReference type="CDD" id="cd03351">
    <property type="entry name" value="LbH_UDP-GlcNAc_AT"/>
    <property type="match status" value="1"/>
</dbReference>
<dbReference type="Gene3D" id="2.160.10.10">
    <property type="entry name" value="Hexapeptide repeat proteins"/>
    <property type="match status" value="1"/>
</dbReference>
<dbReference type="Gene3D" id="1.20.1180.10">
    <property type="entry name" value="Udp N-acetylglucosamine O-acyltransferase, C-terminal domain"/>
    <property type="match status" value="1"/>
</dbReference>
<dbReference type="HAMAP" id="MF_00387">
    <property type="entry name" value="LpxA"/>
    <property type="match status" value="1"/>
</dbReference>
<dbReference type="InterPro" id="IPR029098">
    <property type="entry name" value="Acetyltransf_C"/>
</dbReference>
<dbReference type="InterPro" id="IPR037157">
    <property type="entry name" value="Acetyltransf_C_sf"/>
</dbReference>
<dbReference type="InterPro" id="IPR001451">
    <property type="entry name" value="Hexapep"/>
</dbReference>
<dbReference type="InterPro" id="IPR010137">
    <property type="entry name" value="Lipid_A_LpxA"/>
</dbReference>
<dbReference type="InterPro" id="IPR011004">
    <property type="entry name" value="Trimer_LpxA-like_sf"/>
</dbReference>
<dbReference type="NCBIfam" id="TIGR01852">
    <property type="entry name" value="lipid_A_lpxA"/>
    <property type="match status" value="1"/>
</dbReference>
<dbReference type="NCBIfam" id="NF003657">
    <property type="entry name" value="PRK05289.1"/>
    <property type="match status" value="1"/>
</dbReference>
<dbReference type="PANTHER" id="PTHR43480">
    <property type="entry name" value="ACYL-[ACYL-CARRIER-PROTEIN]--UDP-N-ACETYLGLUCOSAMINE O-ACYLTRANSFERASE"/>
    <property type="match status" value="1"/>
</dbReference>
<dbReference type="PANTHER" id="PTHR43480:SF1">
    <property type="entry name" value="ACYL-[ACYL-CARRIER-PROTEIN]--UDP-N-ACETYLGLUCOSAMINE O-ACYLTRANSFERASE, MITOCHONDRIAL-RELATED"/>
    <property type="match status" value="1"/>
</dbReference>
<dbReference type="Pfam" id="PF13720">
    <property type="entry name" value="Acetyltransf_11"/>
    <property type="match status" value="1"/>
</dbReference>
<dbReference type="Pfam" id="PF00132">
    <property type="entry name" value="Hexapep"/>
    <property type="match status" value="1"/>
</dbReference>
<dbReference type="PIRSF" id="PIRSF000456">
    <property type="entry name" value="UDP-GlcNAc_acltr"/>
    <property type="match status" value="1"/>
</dbReference>
<dbReference type="SUPFAM" id="SSF51161">
    <property type="entry name" value="Trimeric LpxA-like enzymes"/>
    <property type="match status" value="1"/>
</dbReference>
<dbReference type="PROSITE" id="PS00101">
    <property type="entry name" value="HEXAPEP_TRANSFERASES"/>
    <property type="match status" value="1"/>
</dbReference>
<accession>B5Z919</accession>